<name>RS15_SHEPA</name>
<gene>
    <name evidence="1" type="primary">rpsO</name>
    <name type="ordered locus">Spea_3057</name>
</gene>
<comment type="function">
    <text evidence="1">One of the primary rRNA binding proteins, it binds directly to 16S rRNA where it helps nucleate assembly of the platform of the 30S subunit by binding and bridging several RNA helices of the 16S rRNA.</text>
</comment>
<comment type="function">
    <text evidence="1">Forms an intersubunit bridge (bridge B4) with the 23S rRNA of the 50S subunit in the ribosome.</text>
</comment>
<comment type="subunit">
    <text evidence="1">Part of the 30S ribosomal subunit. Forms a bridge to the 50S subunit in the 70S ribosome, contacting the 23S rRNA.</text>
</comment>
<comment type="similarity">
    <text evidence="1">Belongs to the universal ribosomal protein uS15 family.</text>
</comment>
<sequence>MSLSVEAKAQILAEFGRCENDTGSSEVQVALLTAQINHLQGHFKEHIHDHHSRRGLLRMVSTRRKLLAYLKRTENVRYQELIKKLGLRR</sequence>
<dbReference type="EMBL" id="CP000851">
    <property type="protein sequence ID" value="ABV88374.1"/>
    <property type="molecule type" value="Genomic_DNA"/>
</dbReference>
<dbReference type="RefSeq" id="WP_012156278.1">
    <property type="nucleotide sequence ID" value="NC_009901.1"/>
</dbReference>
<dbReference type="SMR" id="A8H737"/>
<dbReference type="STRING" id="398579.Spea_3057"/>
<dbReference type="KEGG" id="spl:Spea_3057"/>
<dbReference type="eggNOG" id="COG0184">
    <property type="taxonomic scope" value="Bacteria"/>
</dbReference>
<dbReference type="HOGENOM" id="CLU_148518_0_0_6"/>
<dbReference type="OrthoDB" id="9799262at2"/>
<dbReference type="Proteomes" id="UP000002608">
    <property type="component" value="Chromosome"/>
</dbReference>
<dbReference type="GO" id="GO:0022627">
    <property type="term" value="C:cytosolic small ribosomal subunit"/>
    <property type="evidence" value="ECO:0007669"/>
    <property type="project" value="TreeGrafter"/>
</dbReference>
<dbReference type="GO" id="GO:0019843">
    <property type="term" value="F:rRNA binding"/>
    <property type="evidence" value="ECO:0007669"/>
    <property type="project" value="UniProtKB-UniRule"/>
</dbReference>
<dbReference type="GO" id="GO:0003735">
    <property type="term" value="F:structural constituent of ribosome"/>
    <property type="evidence" value="ECO:0007669"/>
    <property type="project" value="InterPro"/>
</dbReference>
<dbReference type="GO" id="GO:0006412">
    <property type="term" value="P:translation"/>
    <property type="evidence" value="ECO:0007669"/>
    <property type="project" value="UniProtKB-UniRule"/>
</dbReference>
<dbReference type="CDD" id="cd00353">
    <property type="entry name" value="Ribosomal_S15p_S13e"/>
    <property type="match status" value="1"/>
</dbReference>
<dbReference type="FunFam" id="1.10.287.10:FF:000002">
    <property type="entry name" value="30S ribosomal protein S15"/>
    <property type="match status" value="1"/>
</dbReference>
<dbReference type="Gene3D" id="6.10.250.3130">
    <property type="match status" value="1"/>
</dbReference>
<dbReference type="Gene3D" id="1.10.287.10">
    <property type="entry name" value="S15/NS1, RNA-binding"/>
    <property type="match status" value="1"/>
</dbReference>
<dbReference type="HAMAP" id="MF_01343_B">
    <property type="entry name" value="Ribosomal_uS15_B"/>
    <property type="match status" value="1"/>
</dbReference>
<dbReference type="InterPro" id="IPR000589">
    <property type="entry name" value="Ribosomal_uS15"/>
</dbReference>
<dbReference type="InterPro" id="IPR005290">
    <property type="entry name" value="Ribosomal_uS15_bac-type"/>
</dbReference>
<dbReference type="InterPro" id="IPR009068">
    <property type="entry name" value="uS15_NS1_RNA-bd_sf"/>
</dbReference>
<dbReference type="NCBIfam" id="TIGR00952">
    <property type="entry name" value="S15_bact"/>
    <property type="match status" value="1"/>
</dbReference>
<dbReference type="PANTHER" id="PTHR23321">
    <property type="entry name" value="RIBOSOMAL PROTEIN S15, BACTERIAL AND ORGANELLAR"/>
    <property type="match status" value="1"/>
</dbReference>
<dbReference type="PANTHER" id="PTHR23321:SF26">
    <property type="entry name" value="SMALL RIBOSOMAL SUBUNIT PROTEIN US15M"/>
    <property type="match status" value="1"/>
</dbReference>
<dbReference type="Pfam" id="PF00312">
    <property type="entry name" value="Ribosomal_S15"/>
    <property type="match status" value="1"/>
</dbReference>
<dbReference type="SMART" id="SM01387">
    <property type="entry name" value="Ribosomal_S15"/>
    <property type="match status" value="1"/>
</dbReference>
<dbReference type="SUPFAM" id="SSF47060">
    <property type="entry name" value="S15/NS1 RNA-binding domain"/>
    <property type="match status" value="1"/>
</dbReference>
<dbReference type="PROSITE" id="PS00362">
    <property type="entry name" value="RIBOSOMAL_S15"/>
    <property type="match status" value="1"/>
</dbReference>
<organism>
    <name type="scientific">Shewanella pealeana (strain ATCC 700345 / ANG-SQ1)</name>
    <dbReference type="NCBI Taxonomy" id="398579"/>
    <lineage>
        <taxon>Bacteria</taxon>
        <taxon>Pseudomonadati</taxon>
        <taxon>Pseudomonadota</taxon>
        <taxon>Gammaproteobacteria</taxon>
        <taxon>Alteromonadales</taxon>
        <taxon>Shewanellaceae</taxon>
        <taxon>Shewanella</taxon>
    </lineage>
</organism>
<protein>
    <recommendedName>
        <fullName evidence="1">Small ribosomal subunit protein uS15</fullName>
    </recommendedName>
    <alternativeName>
        <fullName evidence="2">30S ribosomal protein S15</fullName>
    </alternativeName>
</protein>
<feature type="chain" id="PRO_1000086820" description="Small ribosomal subunit protein uS15">
    <location>
        <begin position="1"/>
        <end position="89"/>
    </location>
</feature>
<evidence type="ECO:0000255" key="1">
    <source>
        <dbReference type="HAMAP-Rule" id="MF_01343"/>
    </source>
</evidence>
<evidence type="ECO:0000305" key="2"/>
<proteinExistence type="inferred from homology"/>
<reference key="1">
    <citation type="submission" date="2007-10" db="EMBL/GenBank/DDBJ databases">
        <title>Complete sequence of Shewanella pealeana ATCC 700345.</title>
        <authorList>
            <consortium name="US DOE Joint Genome Institute"/>
            <person name="Copeland A."/>
            <person name="Lucas S."/>
            <person name="Lapidus A."/>
            <person name="Barry K."/>
            <person name="Glavina del Rio T."/>
            <person name="Dalin E."/>
            <person name="Tice H."/>
            <person name="Pitluck S."/>
            <person name="Chertkov O."/>
            <person name="Brettin T."/>
            <person name="Bruce D."/>
            <person name="Detter J.C."/>
            <person name="Han C."/>
            <person name="Schmutz J."/>
            <person name="Larimer F."/>
            <person name="Land M."/>
            <person name="Hauser L."/>
            <person name="Kyrpides N."/>
            <person name="Kim E."/>
            <person name="Zhao J.-S.Z."/>
            <person name="Manno D."/>
            <person name="Hawari J."/>
            <person name="Richardson P."/>
        </authorList>
    </citation>
    <scope>NUCLEOTIDE SEQUENCE [LARGE SCALE GENOMIC DNA]</scope>
    <source>
        <strain>ATCC 700345 / ANG-SQ1</strain>
    </source>
</reference>
<keyword id="KW-1185">Reference proteome</keyword>
<keyword id="KW-0687">Ribonucleoprotein</keyword>
<keyword id="KW-0689">Ribosomal protein</keyword>
<keyword id="KW-0694">RNA-binding</keyword>
<keyword id="KW-0699">rRNA-binding</keyword>
<accession>A8H737</accession>